<dbReference type="EMBL" id="U55021">
    <property type="status" value="NOT_ANNOTATED_CDS"/>
    <property type="molecule type" value="Genomic_DNA"/>
</dbReference>
<dbReference type="EMBL" id="Z75069">
    <property type="status" value="NOT_ANNOTATED_CDS"/>
    <property type="molecule type" value="Genomic_DNA"/>
</dbReference>
<dbReference type="EMBL" id="AF479978">
    <property type="protein sequence ID" value="AAL79291.1"/>
    <property type="molecule type" value="Genomic_DNA"/>
</dbReference>
<dbReference type="PaxDb" id="4932-YOR161W-B"/>
<dbReference type="TopDownProteomics" id="Q8TGL4"/>
<dbReference type="EnsemblFungi" id="YOR161W-B_mRNA">
    <property type="protein sequence ID" value="YOR161W-B"/>
    <property type="gene ID" value="YOR161W-B"/>
</dbReference>
<dbReference type="AGR" id="SGD:S000028714"/>
<dbReference type="SGD" id="S000028714">
    <property type="gene designation" value="YOR161W-B"/>
</dbReference>
<dbReference type="HOGENOM" id="CLU_2499622_0_0_1"/>
<reference key="1">
    <citation type="journal article" date="1996" name="Yeast">
        <title>Analysis of a 22,956 bp region on the right arm of Saccharomyces cerevisiae chromosome XV.</title>
        <authorList>
            <person name="Madania A."/>
            <person name="Poch O."/>
            <person name="Tarassov I.A."/>
            <person name="Winsor B."/>
            <person name="Martin R.P."/>
        </authorList>
    </citation>
    <scope>NUCLEOTIDE SEQUENCE [GENOMIC DNA]</scope>
    <source>
        <strain>S288c / FY1678</strain>
    </source>
</reference>
<reference key="2">
    <citation type="journal article" date="1997" name="Nature">
        <title>The nucleotide sequence of Saccharomyces cerevisiae chromosome XV.</title>
        <authorList>
            <person name="Dujon B."/>
            <person name="Albermann K."/>
            <person name="Aldea M."/>
            <person name="Alexandraki D."/>
            <person name="Ansorge W."/>
            <person name="Arino J."/>
            <person name="Benes V."/>
            <person name="Bohn C."/>
            <person name="Bolotin-Fukuhara M."/>
            <person name="Bordonne R."/>
            <person name="Boyer J."/>
            <person name="Camasses A."/>
            <person name="Casamayor A."/>
            <person name="Casas C."/>
            <person name="Cheret G."/>
            <person name="Cziepluch C."/>
            <person name="Daignan-Fornier B."/>
            <person name="Dang V.-D."/>
            <person name="de Haan M."/>
            <person name="Delius H."/>
            <person name="Durand P."/>
            <person name="Fairhead C."/>
            <person name="Feldmann H."/>
            <person name="Gaillon L."/>
            <person name="Galisson F."/>
            <person name="Gamo F.-J."/>
            <person name="Gancedo C."/>
            <person name="Goffeau A."/>
            <person name="Goulding S.E."/>
            <person name="Grivell L.A."/>
            <person name="Habbig B."/>
            <person name="Hand N.J."/>
            <person name="Hani J."/>
            <person name="Hattenhorst U."/>
            <person name="Hebling U."/>
            <person name="Hernando Y."/>
            <person name="Herrero E."/>
            <person name="Heumann K."/>
            <person name="Hiesel R."/>
            <person name="Hilger F."/>
            <person name="Hofmann B."/>
            <person name="Hollenberg C.P."/>
            <person name="Hughes B."/>
            <person name="Jauniaux J.-C."/>
            <person name="Kalogeropoulos A."/>
            <person name="Katsoulou C."/>
            <person name="Kordes E."/>
            <person name="Lafuente M.J."/>
            <person name="Landt O."/>
            <person name="Louis E.J."/>
            <person name="Maarse A.C."/>
            <person name="Madania A."/>
            <person name="Mannhaupt G."/>
            <person name="Marck C."/>
            <person name="Martin R.P."/>
            <person name="Mewes H.-W."/>
            <person name="Michaux G."/>
            <person name="Paces V."/>
            <person name="Parle-McDermott A.G."/>
            <person name="Pearson B.M."/>
            <person name="Perrin A."/>
            <person name="Pettersson B."/>
            <person name="Poch O."/>
            <person name="Pohl T.M."/>
            <person name="Poirey R."/>
            <person name="Portetelle D."/>
            <person name="Pujol A."/>
            <person name="Purnelle B."/>
            <person name="Ramezani Rad M."/>
            <person name="Rechmann S."/>
            <person name="Schwager C."/>
            <person name="Schweizer M."/>
            <person name="Sor F."/>
            <person name="Sterky F."/>
            <person name="Tarassov I.A."/>
            <person name="Teodoru C."/>
            <person name="Tettelin H."/>
            <person name="Thierry A."/>
            <person name="Tobiasch E."/>
            <person name="Tzermia M."/>
            <person name="Uhlen M."/>
            <person name="Unseld M."/>
            <person name="Valens M."/>
            <person name="Vandenbol M."/>
            <person name="Vetter I."/>
            <person name="Vlcek C."/>
            <person name="Voet M."/>
            <person name="Volckaert G."/>
            <person name="Voss H."/>
            <person name="Wambutt R."/>
            <person name="Wedler H."/>
            <person name="Wiemann S."/>
            <person name="Winsor B."/>
            <person name="Wolfe K.H."/>
            <person name="Zollner A."/>
            <person name="Zumstein E."/>
            <person name="Kleine K."/>
        </authorList>
    </citation>
    <scope>NUCLEOTIDE SEQUENCE [LARGE SCALE GENOMIC DNA]</scope>
    <source>
        <strain>ATCC 204508 / S288c</strain>
    </source>
</reference>
<reference key="3">
    <citation type="journal article" date="2014" name="G3 (Bethesda)">
        <title>The reference genome sequence of Saccharomyces cerevisiae: Then and now.</title>
        <authorList>
            <person name="Engel S.R."/>
            <person name="Dietrich F.S."/>
            <person name="Fisk D.G."/>
            <person name="Binkley G."/>
            <person name="Balakrishnan R."/>
            <person name="Costanzo M.C."/>
            <person name="Dwight S.S."/>
            <person name="Hitz B.C."/>
            <person name="Karra K."/>
            <person name="Nash R.S."/>
            <person name="Weng S."/>
            <person name="Wong E.D."/>
            <person name="Lloyd P."/>
            <person name="Skrzypek M.S."/>
            <person name="Miyasato S.R."/>
            <person name="Simison M."/>
            <person name="Cherry J.M."/>
        </authorList>
    </citation>
    <scope>GENOME REANNOTATION</scope>
    <source>
        <strain>ATCC 204508 / S288c</strain>
    </source>
</reference>
<reference key="4">
    <citation type="journal article" date="2002" name="Nat. Biotechnol.">
        <title>An integrated approach for finding overlooked genes in yeast.</title>
        <authorList>
            <person name="Kumar A."/>
            <person name="Harrison P.M."/>
            <person name="Cheung K.-H."/>
            <person name="Lan N."/>
            <person name="Echols N."/>
            <person name="Bertone P."/>
            <person name="Miller P."/>
            <person name="Gerstein M.B."/>
            <person name="Snyder M."/>
        </authorList>
    </citation>
    <scope>NUCLEOTIDE SEQUENCE [GENOMIC DNA]</scope>
</reference>
<sequence length="86" mass="9893">MNVKTKNTIPADQYLKDMYMMAVPREATRLMTIPQYINCFGKIRQSVRPKTENTRAIMHTKTSRMAALVFSVPVFTPSYIPEPVLL</sequence>
<organism>
    <name type="scientific">Saccharomyces cerevisiae (strain ATCC 204508 / S288c)</name>
    <name type="common">Baker's yeast</name>
    <dbReference type="NCBI Taxonomy" id="559292"/>
    <lineage>
        <taxon>Eukaryota</taxon>
        <taxon>Fungi</taxon>
        <taxon>Dikarya</taxon>
        <taxon>Ascomycota</taxon>
        <taxon>Saccharomycotina</taxon>
        <taxon>Saccharomycetes</taxon>
        <taxon>Saccharomycetales</taxon>
        <taxon>Saccharomycetaceae</taxon>
        <taxon>Saccharomyces</taxon>
    </lineage>
</organism>
<name>YO61B_YEAST</name>
<gene>
    <name type="ordered locus">YOR161W-B</name>
</gene>
<comment type="miscellaneous">
    <text evidence="1">Completely overlaps PNS1.</text>
</comment>
<comment type="caution">
    <text evidence="2">Product of a dubious gene prediction unlikely to encode a functional protein. Because of that it is not part of the S.cerevisiae S288c complete/reference proteome set.</text>
</comment>
<protein>
    <recommendedName>
        <fullName>Putative uncharacterized protein YOR161W-B</fullName>
    </recommendedName>
</protein>
<proteinExistence type="uncertain"/>
<feature type="chain" id="PRO_0000299718" description="Putative uncharacterized protein YOR161W-B">
    <location>
        <begin position="1"/>
        <end position="86"/>
    </location>
</feature>
<accession>Q8TGL4</accession>
<evidence type="ECO:0000305" key="1"/>
<evidence type="ECO:0000305" key="2">
    <source>
    </source>
</evidence>